<sequence>MKKFIFCFLYLYTLNIFAVSKIAHNKLNSCSITRNIFNNYEPKVFETTNNLLRKTGRLSKFYGEMILIRGKILDQNCVPVTDAKVYLWQAGSGGKYPYEPLKTRVDKRRFTNKSDSSFTGSGIVTTNNKGEYYFISMLPYKSSHYLRTANIRIEHPNLTTLETRLELSDQNMCDNDCGEISPILTETKKNIQSYCFDLVLQGTTLKRY</sequence>
<organism>
    <name type="scientific">Rickettsia typhi (strain ATCC VR-144 / Wilmington)</name>
    <dbReference type="NCBI Taxonomy" id="257363"/>
    <lineage>
        <taxon>Bacteria</taxon>
        <taxon>Pseudomonadati</taxon>
        <taxon>Pseudomonadota</taxon>
        <taxon>Alphaproteobacteria</taxon>
        <taxon>Rickettsiales</taxon>
        <taxon>Rickettsiaceae</taxon>
        <taxon>Rickettsieae</taxon>
        <taxon>Rickettsia</taxon>
        <taxon>typhus group</taxon>
    </lineage>
</organism>
<proteinExistence type="inferred from homology"/>
<evidence type="ECO:0000305" key="1"/>
<reference key="1">
    <citation type="journal article" date="2004" name="J. Bacteriol.">
        <title>Complete genome sequence of Rickettsia typhi and comparison with sequences of other Rickettsiae.</title>
        <authorList>
            <person name="McLeod M.P."/>
            <person name="Qin X."/>
            <person name="Karpathy S.E."/>
            <person name="Gioia J."/>
            <person name="Highlander S.K."/>
            <person name="Fox G.E."/>
            <person name="McNeill T.Z."/>
            <person name="Jiang H."/>
            <person name="Muzny D."/>
            <person name="Jacob L.S."/>
            <person name="Hawes A.C."/>
            <person name="Sodergren E."/>
            <person name="Gill R."/>
            <person name="Hume J."/>
            <person name="Morgan M."/>
            <person name="Fan G."/>
            <person name="Amin A.G."/>
            <person name="Gibbs R.A."/>
            <person name="Hong C."/>
            <person name="Yu X.-J."/>
            <person name="Walker D.H."/>
            <person name="Weinstock G.M."/>
        </authorList>
    </citation>
    <scope>NUCLEOTIDE SEQUENCE [LARGE SCALE GENOMIC DNA]</scope>
    <source>
        <strain>ATCC VR-144 / Wilmington</strain>
    </source>
</reference>
<accession>Q68WY1</accession>
<gene>
    <name type="ordered locus">RT0384</name>
</gene>
<name>Y384_RICTY</name>
<dbReference type="EC" id="1.13.11.-"/>
<dbReference type="EMBL" id="AE017197">
    <property type="protein sequence ID" value="AAU03861.1"/>
    <property type="molecule type" value="Genomic_DNA"/>
</dbReference>
<dbReference type="RefSeq" id="WP_011190845.1">
    <property type="nucleotide sequence ID" value="NC_006142.1"/>
</dbReference>
<dbReference type="SMR" id="Q68WY1"/>
<dbReference type="KEGG" id="rty:RT0384"/>
<dbReference type="eggNOG" id="COG3485">
    <property type="taxonomic scope" value="Bacteria"/>
</dbReference>
<dbReference type="HOGENOM" id="CLU_1320101_0_0_5"/>
<dbReference type="OrthoDB" id="9805815at2"/>
<dbReference type="Proteomes" id="UP000000604">
    <property type="component" value="Chromosome"/>
</dbReference>
<dbReference type="GO" id="GO:0008199">
    <property type="term" value="F:ferric iron binding"/>
    <property type="evidence" value="ECO:0007669"/>
    <property type="project" value="InterPro"/>
</dbReference>
<dbReference type="GO" id="GO:0016702">
    <property type="term" value="F:oxidoreductase activity, acting on single donors with incorporation of molecular oxygen, incorporation of two atoms of oxygen"/>
    <property type="evidence" value="ECO:0007669"/>
    <property type="project" value="InterPro"/>
</dbReference>
<dbReference type="Gene3D" id="2.60.130.10">
    <property type="entry name" value="Aromatic compound dioxygenase"/>
    <property type="match status" value="1"/>
</dbReference>
<dbReference type="InterPro" id="IPR000627">
    <property type="entry name" value="Intradiol_dOase_C"/>
</dbReference>
<dbReference type="InterPro" id="IPR015889">
    <property type="entry name" value="Intradiol_dOase_core"/>
</dbReference>
<dbReference type="InterPro" id="IPR050770">
    <property type="entry name" value="Intradiol_RC_Dioxygenase"/>
</dbReference>
<dbReference type="PANTHER" id="PTHR33711">
    <property type="entry name" value="DIOXYGENASE, PUTATIVE (AFU_ORTHOLOGUE AFUA_2G02910)-RELATED"/>
    <property type="match status" value="1"/>
</dbReference>
<dbReference type="PANTHER" id="PTHR33711:SF10">
    <property type="entry name" value="INTRADIOL RING-CLEAVAGE DIOXYGENASES DOMAIN-CONTAINING PROTEIN"/>
    <property type="match status" value="1"/>
</dbReference>
<dbReference type="Pfam" id="PF00775">
    <property type="entry name" value="Dioxygenase_C"/>
    <property type="match status" value="1"/>
</dbReference>
<dbReference type="SUPFAM" id="SSF49482">
    <property type="entry name" value="Aromatic compound dioxygenase"/>
    <property type="match status" value="1"/>
</dbReference>
<protein>
    <recommendedName>
        <fullName>Putative dioxygenase RT0384</fullName>
        <ecNumber>1.13.11.-</ecNumber>
    </recommendedName>
</protein>
<comment type="similarity">
    <text evidence="1">Belongs to the intradiol ring-cleavage dioxygenase family.</text>
</comment>
<feature type="chain" id="PRO_0000280770" description="Putative dioxygenase RT0384">
    <location>
        <begin position="1"/>
        <end position="208"/>
    </location>
</feature>
<keyword id="KW-0223">Dioxygenase</keyword>
<keyword id="KW-0560">Oxidoreductase</keyword>